<evidence type="ECO:0000255" key="1">
    <source>
        <dbReference type="HAMAP-Rule" id="MF_00600"/>
    </source>
</evidence>
<evidence type="ECO:0000256" key="2">
    <source>
        <dbReference type="SAM" id="MobiDB-lite"/>
    </source>
</evidence>
<protein>
    <recommendedName>
        <fullName evidence="1">Chaperonin GroEL</fullName>
        <ecNumber evidence="1">5.6.1.7</ecNumber>
    </recommendedName>
    <alternativeName>
        <fullName evidence="1">60 kDa chaperonin</fullName>
    </alternativeName>
    <alternativeName>
        <fullName evidence="1">Chaperonin-60</fullName>
        <shortName evidence="1">Cpn60</shortName>
    </alternativeName>
</protein>
<comment type="function">
    <text evidence="1">Together with its co-chaperonin GroES, plays an essential role in assisting protein folding. The GroEL-GroES system forms a nano-cage that allows encapsulation of the non-native substrate proteins and provides a physical environment optimized to promote and accelerate protein folding.</text>
</comment>
<comment type="catalytic activity">
    <reaction evidence="1">
        <text>ATP + H2O + a folded polypeptide = ADP + phosphate + an unfolded polypeptide.</text>
        <dbReference type="EC" id="5.6.1.7"/>
    </reaction>
</comment>
<comment type="subunit">
    <text evidence="1">Forms a cylinder of 14 subunits composed of two heptameric rings stacked back-to-back. Interacts with the co-chaperonin GroES.</text>
</comment>
<comment type="subcellular location">
    <subcellularLocation>
        <location evidence="1">Cytoplasm</location>
    </subcellularLocation>
</comment>
<comment type="similarity">
    <text evidence="1">Belongs to the chaperonin (HSP60) family.</text>
</comment>
<keyword id="KW-0067">ATP-binding</keyword>
<keyword id="KW-0143">Chaperone</keyword>
<keyword id="KW-0963">Cytoplasm</keyword>
<keyword id="KW-0413">Isomerase</keyword>
<keyword id="KW-0547">Nucleotide-binding</keyword>
<accession>B3ENV7</accession>
<dbReference type="EC" id="5.6.1.7" evidence="1"/>
<dbReference type="EMBL" id="CP001101">
    <property type="protein sequence ID" value="ACE03734.1"/>
    <property type="molecule type" value="Genomic_DNA"/>
</dbReference>
<dbReference type="SMR" id="B3ENV7"/>
<dbReference type="STRING" id="331678.Cphamn1_0783"/>
<dbReference type="KEGG" id="cpb:Cphamn1_0783"/>
<dbReference type="eggNOG" id="COG0459">
    <property type="taxonomic scope" value="Bacteria"/>
</dbReference>
<dbReference type="HOGENOM" id="CLU_016503_3_0_10"/>
<dbReference type="OrthoDB" id="9766614at2"/>
<dbReference type="GO" id="GO:0005737">
    <property type="term" value="C:cytoplasm"/>
    <property type="evidence" value="ECO:0007669"/>
    <property type="project" value="UniProtKB-SubCell"/>
</dbReference>
<dbReference type="GO" id="GO:0005524">
    <property type="term" value="F:ATP binding"/>
    <property type="evidence" value="ECO:0007669"/>
    <property type="project" value="UniProtKB-UniRule"/>
</dbReference>
<dbReference type="GO" id="GO:0140662">
    <property type="term" value="F:ATP-dependent protein folding chaperone"/>
    <property type="evidence" value="ECO:0007669"/>
    <property type="project" value="InterPro"/>
</dbReference>
<dbReference type="GO" id="GO:0016853">
    <property type="term" value="F:isomerase activity"/>
    <property type="evidence" value="ECO:0007669"/>
    <property type="project" value="UniProtKB-KW"/>
</dbReference>
<dbReference type="GO" id="GO:0051082">
    <property type="term" value="F:unfolded protein binding"/>
    <property type="evidence" value="ECO:0007669"/>
    <property type="project" value="UniProtKB-UniRule"/>
</dbReference>
<dbReference type="GO" id="GO:0042026">
    <property type="term" value="P:protein refolding"/>
    <property type="evidence" value="ECO:0007669"/>
    <property type="project" value="UniProtKB-UniRule"/>
</dbReference>
<dbReference type="CDD" id="cd03344">
    <property type="entry name" value="GroEL"/>
    <property type="match status" value="1"/>
</dbReference>
<dbReference type="FunFam" id="3.50.7.10:FF:000001">
    <property type="entry name" value="60 kDa chaperonin"/>
    <property type="match status" value="1"/>
</dbReference>
<dbReference type="Gene3D" id="3.50.7.10">
    <property type="entry name" value="GroEL"/>
    <property type="match status" value="1"/>
</dbReference>
<dbReference type="Gene3D" id="1.10.560.10">
    <property type="entry name" value="GroEL-like equatorial domain"/>
    <property type="match status" value="1"/>
</dbReference>
<dbReference type="Gene3D" id="3.30.260.10">
    <property type="entry name" value="TCP-1-like chaperonin intermediate domain"/>
    <property type="match status" value="1"/>
</dbReference>
<dbReference type="HAMAP" id="MF_00600">
    <property type="entry name" value="CH60"/>
    <property type="match status" value="1"/>
</dbReference>
<dbReference type="InterPro" id="IPR018370">
    <property type="entry name" value="Chaperonin_Cpn60_CS"/>
</dbReference>
<dbReference type="InterPro" id="IPR001844">
    <property type="entry name" value="Cpn60/GroEL"/>
</dbReference>
<dbReference type="InterPro" id="IPR002423">
    <property type="entry name" value="Cpn60/GroEL/TCP-1"/>
</dbReference>
<dbReference type="InterPro" id="IPR027409">
    <property type="entry name" value="GroEL-like_apical_dom_sf"/>
</dbReference>
<dbReference type="InterPro" id="IPR027413">
    <property type="entry name" value="GROEL-like_equatorial_sf"/>
</dbReference>
<dbReference type="InterPro" id="IPR027410">
    <property type="entry name" value="TCP-1-like_intermed_sf"/>
</dbReference>
<dbReference type="NCBIfam" id="TIGR02348">
    <property type="entry name" value="GroEL"/>
    <property type="match status" value="1"/>
</dbReference>
<dbReference type="NCBIfam" id="NF000592">
    <property type="entry name" value="PRK00013.1"/>
    <property type="match status" value="1"/>
</dbReference>
<dbReference type="NCBIfam" id="NF009487">
    <property type="entry name" value="PRK12849.1"/>
    <property type="match status" value="1"/>
</dbReference>
<dbReference type="NCBIfam" id="NF009488">
    <property type="entry name" value="PRK12850.1"/>
    <property type="match status" value="1"/>
</dbReference>
<dbReference type="NCBIfam" id="NF009489">
    <property type="entry name" value="PRK12851.1"/>
    <property type="match status" value="1"/>
</dbReference>
<dbReference type="PANTHER" id="PTHR45633">
    <property type="entry name" value="60 KDA HEAT SHOCK PROTEIN, MITOCHONDRIAL"/>
    <property type="match status" value="1"/>
</dbReference>
<dbReference type="Pfam" id="PF00118">
    <property type="entry name" value="Cpn60_TCP1"/>
    <property type="match status" value="1"/>
</dbReference>
<dbReference type="PRINTS" id="PR00298">
    <property type="entry name" value="CHAPERONIN60"/>
</dbReference>
<dbReference type="SUPFAM" id="SSF52029">
    <property type="entry name" value="GroEL apical domain-like"/>
    <property type="match status" value="1"/>
</dbReference>
<dbReference type="SUPFAM" id="SSF48592">
    <property type="entry name" value="GroEL equatorial domain-like"/>
    <property type="match status" value="1"/>
</dbReference>
<dbReference type="SUPFAM" id="SSF54849">
    <property type="entry name" value="GroEL-intermediate domain like"/>
    <property type="match status" value="1"/>
</dbReference>
<dbReference type="PROSITE" id="PS00296">
    <property type="entry name" value="CHAPERONINS_CPN60"/>
    <property type="match status" value="1"/>
</dbReference>
<feature type="chain" id="PRO_1000129988" description="Chaperonin GroEL">
    <location>
        <begin position="1"/>
        <end position="550"/>
    </location>
</feature>
<feature type="region of interest" description="Disordered" evidence="2">
    <location>
        <begin position="528"/>
        <end position="550"/>
    </location>
</feature>
<feature type="compositionally biased region" description="Gly residues" evidence="2">
    <location>
        <begin position="538"/>
        <end position="550"/>
    </location>
</feature>
<feature type="binding site" evidence="1">
    <location>
        <begin position="30"/>
        <end position="33"/>
    </location>
    <ligand>
        <name>ATP</name>
        <dbReference type="ChEBI" id="CHEBI:30616"/>
    </ligand>
</feature>
<feature type="binding site" evidence="1">
    <location>
        <position position="51"/>
    </location>
    <ligand>
        <name>ATP</name>
        <dbReference type="ChEBI" id="CHEBI:30616"/>
    </ligand>
</feature>
<feature type="binding site" evidence="1">
    <location>
        <begin position="87"/>
        <end position="91"/>
    </location>
    <ligand>
        <name>ATP</name>
        <dbReference type="ChEBI" id="CHEBI:30616"/>
    </ligand>
</feature>
<feature type="binding site" evidence="1">
    <location>
        <position position="415"/>
    </location>
    <ligand>
        <name>ATP</name>
        <dbReference type="ChEBI" id="CHEBI:30616"/>
    </ligand>
</feature>
<feature type="binding site" evidence="1">
    <location>
        <position position="496"/>
    </location>
    <ligand>
        <name>ATP</name>
        <dbReference type="ChEBI" id="CHEBI:30616"/>
    </ligand>
</feature>
<name>CH60_CHLPB</name>
<reference key="1">
    <citation type="submission" date="2008-06" db="EMBL/GenBank/DDBJ databases">
        <title>Complete sequence of Chlorobium phaeobacteroides BS1.</title>
        <authorList>
            <consortium name="US DOE Joint Genome Institute"/>
            <person name="Lucas S."/>
            <person name="Copeland A."/>
            <person name="Lapidus A."/>
            <person name="Glavina del Rio T."/>
            <person name="Dalin E."/>
            <person name="Tice H."/>
            <person name="Bruce D."/>
            <person name="Goodwin L."/>
            <person name="Pitluck S."/>
            <person name="Schmutz J."/>
            <person name="Larimer F."/>
            <person name="Land M."/>
            <person name="Hauser L."/>
            <person name="Kyrpides N."/>
            <person name="Ovchinnikova G."/>
            <person name="Li T."/>
            <person name="Liu Z."/>
            <person name="Zhao F."/>
            <person name="Overmann J."/>
            <person name="Bryant D.A."/>
            <person name="Richardson P."/>
        </authorList>
    </citation>
    <scope>NUCLEOTIDE SEQUENCE [LARGE SCALE GENOMIC DNA]</scope>
    <source>
        <strain>BS1</strain>
    </source>
</reference>
<gene>
    <name evidence="1" type="primary">groEL</name>
    <name evidence="1" type="synonym">groL</name>
    <name type="ordered locus">Cphamn1_0783</name>
</gene>
<organism>
    <name type="scientific">Chlorobium phaeobacteroides (strain BS1)</name>
    <dbReference type="NCBI Taxonomy" id="331678"/>
    <lineage>
        <taxon>Bacteria</taxon>
        <taxon>Pseudomonadati</taxon>
        <taxon>Chlorobiota</taxon>
        <taxon>Chlorobiia</taxon>
        <taxon>Chlorobiales</taxon>
        <taxon>Chlorobiaceae</taxon>
        <taxon>Chlorobium/Pelodictyon group</taxon>
        <taxon>Chlorobium</taxon>
    </lineage>
</organism>
<sequence length="550" mass="58354">MSAKDILFDASARAKLKVGVDKLADAVKVTLGPAGRNVLIDKKFGAPTSTKDGVTVAKEIELEDSFENMGAQMVREVSSKTSDVAGDGTTTATVLAQAIYREGLKNVAAGARPIDLKRGIDKAVKEVIGELRTISNDISGKIEIAQVGTISANNDPEIGQLIADAMEKVGKDGVITVEEAKGMDTELKVVEGMQFDRGYLSPYFVTNSEKMDAELEDPYILIHDKKISNMKDLLPILEKTAQSGRPLMIISEDIEGEALATLVVNKLRGTLKVCAVKAPGFGDRRKAMLEDIAILTGGTVISEEKGYKLENATISYLGQAATVTVDKDNTTIVEGKGQADDIKARINEIKNQIDASTSDYDTEKLQERLAKLSGGVAVINIGASTEVEMKEKKARVEDALHATRAAVQEGIVAGGGVALIRAAKGLDNVQPENEDQKTGVEIVRRALEEPLRQIVANTGTTDGAVVVERVKQGEGDFGFNARTEEYEKMTEAGVVDPTKVTRTALENAASVAGILLTTEAAITDIKEEGGDMPAMPPGGMGGMGGMGGMM</sequence>
<proteinExistence type="inferred from homology"/>